<comment type="function">
    <text evidence="1">Catalyzes the attachment of proline to tRNA(Pro) in a two-step reaction: proline is first activated by ATP to form Pro-AMP and then transferred to the acceptor end of tRNA(Pro).</text>
</comment>
<comment type="catalytic activity">
    <reaction evidence="1">
        <text>tRNA(Pro) + L-proline + ATP = L-prolyl-tRNA(Pro) + AMP + diphosphate</text>
        <dbReference type="Rhea" id="RHEA:14305"/>
        <dbReference type="Rhea" id="RHEA-COMP:9700"/>
        <dbReference type="Rhea" id="RHEA-COMP:9702"/>
        <dbReference type="ChEBI" id="CHEBI:30616"/>
        <dbReference type="ChEBI" id="CHEBI:33019"/>
        <dbReference type="ChEBI" id="CHEBI:60039"/>
        <dbReference type="ChEBI" id="CHEBI:78442"/>
        <dbReference type="ChEBI" id="CHEBI:78532"/>
        <dbReference type="ChEBI" id="CHEBI:456215"/>
        <dbReference type="EC" id="6.1.1.15"/>
    </reaction>
</comment>
<comment type="subunit">
    <text evidence="1">Homodimer.</text>
</comment>
<comment type="subcellular location">
    <subcellularLocation>
        <location evidence="1">Cytoplasm</location>
    </subcellularLocation>
</comment>
<comment type="similarity">
    <text evidence="1">Belongs to the class-II aminoacyl-tRNA synthetase family. ProS type 2 subfamily.</text>
</comment>
<feature type="chain" id="PRO_0000248913" description="Proline--tRNA ligase">
    <location>
        <begin position="1"/>
        <end position="445"/>
    </location>
</feature>
<dbReference type="EC" id="6.1.1.15" evidence="1"/>
<dbReference type="EMBL" id="CP000143">
    <property type="protein sequence ID" value="ABA79955.1"/>
    <property type="molecule type" value="Genomic_DNA"/>
</dbReference>
<dbReference type="RefSeq" id="WP_011338481.1">
    <property type="nucleotide sequence ID" value="NC_007493.2"/>
</dbReference>
<dbReference type="RefSeq" id="YP_353856.1">
    <property type="nucleotide sequence ID" value="NC_007493.2"/>
</dbReference>
<dbReference type="SMR" id="Q3IZS9"/>
<dbReference type="STRING" id="272943.RSP_0778"/>
<dbReference type="EnsemblBacteria" id="ABA79955">
    <property type="protein sequence ID" value="ABA79955"/>
    <property type="gene ID" value="RSP_0778"/>
</dbReference>
<dbReference type="GeneID" id="3718144"/>
<dbReference type="KEGG" id="rsp:RSP_0778"/>
<dbReference type="PATRIC" id="fig|272943.9.peg.2735"/>
<dbReference type="eggNOG" id="COG0442">
    <property type="taxonomic scope" value="Bacteria"/>
</dbReference>
<dbReference type="OrthoDB" id="9809052at2"/>
<dbReference type="PhylomeDB" id="Q3IZS9"/>
<dbReference type="Proteomes" id="UP000002703">
    <property type="component" value="Chromosome 1"/>
</dbReference>
<dbReference type="GO" id="GO:0005829">
    <property type="term" value="C:cytosol"/>
    <property type="evidence" value="ECO:0007669"/>
    <property type="project" value="TreeGrafter"/>
</dbReference>
<dbReference type="GO" id="GO:0005524">
    <property type="term" value="F:ATP binding"/>
    <property type="evidence" value="ECO:0007669"/>
    <property type="project" value="UniProtKB-UniRule"/>
</dbReference>
<dbReference type="GO" id="GO:0004827">
    <property type="term" value="F:proline-tRNA ligase activity"/>
    <property type="evidence" value="ECO:0007669"/>
    <property type="project" value="UniProtKB-UniRule"/>
</dbReference>
<dbReference type="GO" id="GO:0006433">
    <property type="term" value="P:prolyl-tRNA aminoacylation"/>
    <property type="evidence" value="ECO:0007669"/>
    <property type="project" value="UniProtKB-UniRule"/>
</dbReference>
<dbReference type="CDD" id="cd00861">
    <property type="entry name" value="ProRS_anticodon_short"/>
    <property type="match status" value="1"/>
</dbReference>
<dbReference type="CDD" id="cd00779">
    <property type="entry name" value="ProRS_core_prok"/>
    <property type="match status" value="1"/>
</dbReference>
<dbReference type="FunFam" id="3.30.930.10:FF:000042">
    <property type="entry name" value="probable proline--tRNA ligase, mitochondrial"/>
    <property type="match status" value="1"/>
</dbReference>
<dbReference type="FunFam" id="3.40.50.800:FF:000032">
    <property type="entry name" value="Proline--tRNA ligase"/>
    <property type="match status" value="1"/>
</dbReference>
<dbReference type="Gene3D" id="3.40.50.800">
    <property type="entry name" value="Anticodon-binding domain"/>
    <property type="match status" value="1"/>
</dbReference>
<dbReference type="Gene3D" id="3.30.930.10">
    <property type="entry name" value="Bira Bifunctional Protein, Domain 2"/>
    <property type="match status" value="1"/>
</dbReference>
<dbReference type="HAMAP" id="MF_01570">
    <property type="entry name" value="Pro_tRNA_synth_type2"/>
    <property type="match status" value="1"/>
</dbReference>
<dbReference type="InterPro" id="IPR002314">
    <property type="entry name" value="aa-tRNA-synt_IIb"/>
</dbReference>
<dbReference type="InterPro" id="IPR006195">
    <property type="entry name" value="aa-tRNA-synth_II"/>
</dbReference>
<dbReference type="InterPro" id="IPR045864">
    <property type="entry name" value="aa-tRNA-synth_II/BPL/LPL"/>
</dbReference>
<dbReference type="InterPro" id="IPR004154">
    <property type="entry name" value="Anticodon-bd"/>
</dbReference>
<dbReference type="InterPro" id="IPR036621">
    <property type="entry name" value="Anticodon-bd_dom_sf"/>
</dbReference>
<dbReference type="InterPro" id="IPR002316">
    <property type="entry name" value="Pro-tRNA-ligase_IIa"/>
</dbReference>
<dbReference type="InterPro" id="IPR050062">
    <property type="entry name" value="Pro-tRNA_synthetase"/>
</dbReference>
<dbReference type="InterPro" id="IPR023716">
    <property type="entry name" value="Prolyl-tRNA_ligase_IIa_type2"/>
</dbReference>
<dbReference type="InterPro" id="IPR044140">
    <property type="entry name" value="ProRS_anticodon_short"/>
</dbReference>
<dbReference type="InterPro" id="IPR033730">
    <property type="entry name" value="ProRS_core_prok"/>
</dbReference>
<dbReference type="NCBIfam" id="NF008979">
    <property type="entry name" value="PRK12325.1"/>
    <property type="match status" value="1"/>
</dbReference>
<dbReference type="PANTHER" id="PTHR42753">
    <property type="entry name" value="MITOCHONDRIAL RIBOSOME PROTEIN L39/PROLYL-TRNA LIGASE FAMILY MEMBER"/>
    <property type="match status" value="1"/>
</dbReference>
<dbReference type="PANTHER" id="PTHR42753:SF2">
    <property type="entry name" value="PROLINE--TRNA LIGASE"/>
    <property type="match status" value="1"/>
</dbReference>
<dbReference type="Pfam" id="PF03129">
    <property type="entry name" value="HGTP_anticodon"/>
    <property type="match status" value="1"/>
</dbReference>
<dbReference type="Pfam" id="PF00587">
    <property type="entry name" value="tRNA-synt_2b"/>
    <property type="match status" value="1"/>
</dbReference>
<dbReference type="PRINTS" id="PR01046">
    <property type="entry name" value="TRNASYNTHPRO"/>
</dbReference>
<dbReference type="SUPFAM" id="SSF52954">
    <property type="entry name" value="Class II aaRS ABD-related"/>
    <property type="match status" value="1"/>
</dbReference>
<dbReference type="SUPFAM" id="SSF55681">
    <property type="entry name" value="Class II aaRS and biotin synthetases"/>
    <property type="match status" value="1"/>
</dbReference>
<dbReference type="PROSITE" id="PS50862">
    <property type="entry name" value="AA_TRNA_LIGASE_II"/>
    <property type="match status" value="1"/>
</dbReference>
<name>SYP_CERS4</name>
<keyword id="KW-0030">Aminoacyl-tRNA synthetase</keyword>
<keyword id="KW-0067">ATP-binding</keyword>
<keyword id="KW-0963">Cytoplasm</keyword>
<keyword id="KW-0436">Ligase</keyword>
<keyword id="KW-0547">Nucleotide-binding</keyword>
<keyword id="KW-0648">Protein biosynthesis</keyword>
<keyword id="KW-1185">Reference proteome</keyword>
<proteinExistence type="inferred from homology"/>
<sequence length="445" mass="50421">MRLSRYFLPVLKENPSEAQIVSHRYMLRAGMIKQQAAGIYSWLPLGFKVLKRIEQIVHEEQIRAGHIPLLMPTLQPADLWRESGRYDDYGEEMLRITDRHKRDMLYGPTNEEMITDIFRSHVSSYKDLPLTLYHIQWKFRDEIRPRFGVMRGREFLMKDGYNFDLDYESAIHAYNRHMVSYLRTYERMGLQAIPMRAASGPIGGDNTHEFLVLASTGESEVFYDAAITDLKFGDRVVNYDDRAECEAIVKEWTAPYARTDETHDEAVFGQIPEERRRSSRGIEVGQIFYFGTKYSEPMGANVVTADGSRVPVHMGSHGIGVSRLLGAIIEASHDDKGIIWPEGVTPFHAGIVNLKQGDSSTDLACEALYRDLSARGLEPLYDDRDERAGAKFATMDLIGLPWRITVGPRGISAGKVELTNRRTGESEEMSSGAAVDRLAQIYAGI</sequence>
<gene>
    <name evidence="1" type="primary">proS</name>
    <name type="ordered locus">RHOS4_23870</name>
    <name type="ORF">RSP_0778</name>
</gene>
<protein>
    <recommendedName>
        <fullName evidence="1">Proline--tRNA ligase</fullName>
        <ecNumber evidence="1">6.1.1.15</ecNumber>
    </recommendedName>
    <alternativeName>
        <fullName evidence="1">Prolyl-tRNA synthetase</fullName>
        <shortName evidence="1">ProRS</shortName>
    </alternativeName>
</protein>
<evidence type="ECO:0000255" key="1">
    <source>
        <dbReference type="HAMAP-Rule" id="MF_01570"/>
    </source>
</evidence>
<organism>
    <name type="scientific">Cereibacter sphaeroides (strain ATCC 17023 / DSM 158 / JCM 6121 / CCUG 31486 / LMG 2827 / NBRC 12203 / NCIMB 8253 / ATH 2.4.1.)</name>
    <name type="common">Rhodobacter sphaeroides</name>
    <dbReference type="NCBI Taxonomy" id="272943"/>
    <lineage>
        <taxon>Bacteria</taxon>
        <taxon>Pseudomonadati</taxon>
        <taxon>Pseudomonadota</taxon>
        <taxon>Alphaproteobacteria</taxon>
        <taxon>Rhodobacterales</taxon>
        <taxon>Paracoccaceae</taxon>
        <taxon>Cereibacter</taxon>
    </lineage>
</organism>
<accession>Q3IZS9</accession>
<reference key="1">
    <citation type="submission" date="2005-09" db="EMBL/GenBank/DDBJ databases">
        <title>Complete sequence of chromosome 1 of Rhodobacter sphaeroides 2.4.1.</title>
        <authorList>
            <person name="Copeland A."/>
            <person name="Lucas S."/>
            <person name="Lapidus A."/>
            <person name="Barry K."/>
            <person name="Detter J.C."/>
            <person name="Glavina T."/>
            <person name="Hammon N."/>
            <person name="Israni S."/>
            <person name="Pitluck S."/>
            <person name="Richardson P."/>
            <person name="Mackenzie C."/>
            <person name="Choudhary M."/>
            <person name="Larimer F."/>
            <person name="Hauser L.J."/>
            <person name="Land M."/>
            <person name="Donohue T.J."/>
            <person name="Kaplan S."/>
        </authorList>
    </citation>
    <scope>NUCLEOTIDE SEQUENCE [LARGE SCALE GENOMIC DNA]</scope>
    <source>
        <strain>ATCC 17023 / DSM 158 / JCM 6121 / CCUG 31486 / LMG 2827 / NBRC 12203 / NCIMB 8253 / ATH 2.4.1.</strain>
    </source>
</reference>